<evidence type="ECO:0000255" key="1">
    <source>
        <dbReference type="HAMAP-Rule" id="MF_00083"/>
    </source>
</evidence>
<accession>Q9CJI1</accession>
<comment type="function">
    <text evidence="1">Hydrolyzes ribosome-free peptidyl-tRNAs (with 1 or more amino acids incorporated), which drop off the ribosome during protein synthesis, or as a result of ribosome stalling.</text>
</comment>
<comment type="function">
    <text evidence="1">Catalyzes the release of premature peptidyl moieties from peptidyl-tRNA molecules trapped in stalled 50S ribosomal subunits, and thus maintains levels of free tRNAs and 50S ribosomes.</text>
</comment>
<comment type="catalytic activity">
    <reaction evidence="1">
        <text>an N-acyl-L-alpha-aminoacyl-tRNA + H2O = an N-acyl-L-amino acid + a tRNA + H(+)</text>
        <dbReference type="Rhea" id="RHEA:54448"/>
        <dbReference type="Rhea" id="RHEA-COMP:10123"/>
        <dbReference type="Rhea" id="RHEA-COMP:13883"/>
        <dbReference type="ChEBI" id="CHEBI:15377"/>
        <dbReference type="ChEBI" id="CHEBI:15378"/>
        <dbReference type="ChEBI" id="CHEBI:59874"/>
        <dbReference type="ChEBI" id="CHEBI:78442"/>
        <dbReference type="ChEBI" id="CHEBI:138191"/>
        <dbReference type="EC" id="3.1.1.29"/>
    </reaction>
</comment>
<comment type="subunit">
    <text evidence="1">Monomer.</text>
</comment>
<comment type="subcellular location">
    <subcellularLocation>
        <location evidence="1">Cytoplasm</location>
    </subcellularLocation>
</comment>
<comment type="similarity">
    <text evidence="1">Belongs to the PTH family.</text>
</comment>
<organism>
    <name type="scientific">Lactococcus lactis subsp. lactis (strain IL1403)</name>
    <name type="common">Streptococcus lactis</name>
    <dbReference type="NCBI Taxonomy" id="272623"/>
    <lineage>
        <taxon>Bacteria</taxon>
        <taxon>Bacillati</taxon>
        <taxon>Bacillota</taxon>
        <taxon>Bacilli</taxon>
        <taxon>Lactobacillales</taxon>
        <taxon>Streptococcaceae</taxon>
        <taxon>Lactococcus</taxon>
    </lineage>
</organism>
<protein>
    <recommendedName>
        <fullName evidence="1">Peptidyl-tRNA hydrolase</fullName>
        <shortName evidence="1">Pth</shortName>
        <ecNumber evidence="1">3.1.1.29</ecNumber>
    </recommendedName>
</protein>
<feature type="chain" id="PRO_0000187754" description="Peptidyl-tRNA hydrolase">
    <location>
        <begin position="1"/>
        <end position="188"/>
    </location>
</feature>
<feature type="active site" description="Proton acceptor" evidence="1">
    <location>
        <position position="20"/>
    </location>
</feature>
<feature type="binding site" evidence="1">
    <location>
        <position position="15"/>
    </location>
    <ligand>
        <name>tRNA</name>
        <dbReference type="ChEBI" id="CHEBI:17843"/>
    </ligand>
</feature>
<feature type="binding site" evidence="1">
    <location>
        <position position="66"/>
    </location>
    <ligand>
        <name>tRNA</name>
        <dbReference type="ChEBI" id="CHEBI:17843"/>
    </ligand>
</feature>
<feature type="binding site" evidence="1">
    <location>
        <position position="68"/>
    </location>
    <ligand>
        <name>tRNA</name>
        <dbReference type="ChEBI" id="CHEBI:17843"/>
    </ligand>
</feature>
<feature type="binding site" evidence="1">
    <location>
        <position position="114"/>
    </location>
    <ligand>
        <name>tRNA</name>
        <dbReference type="ChEBI" id="CHEBI:17843"/>
    </ligand>
</feature>
<feature type="site" description="Discriminates between blocked and unblocked aminoacyl-tRNA" evidence="1">
    <location>
        <position position="10"/>
    </location>
</feature>
<feature type="site" description="Stabilizes the basic form of H active site to accept a proton" evidence="1">
    <location>
        <position position="93"/>
    </location>
</feature>
<reference key="1">
    <citation type="journal article" date="2001" name="Genome Res.">
        <title>The complete genome sequence of the lactic acid bacterium Lactococcus lactis ssp. lactis IL1403.</title>
        <authorList>
            <person name="Bolotin A."/>
            <person name="Wincker P."/>
            <person name="Mauger S."/>
            <person name="Jaillon O."/>
            <person name="Malarme K."/>
            <person name="Weissenbach J."/>
            <person name="Ehrlich S.D."/>
            <person name="Sorokin A."/>
        </authorList>
    </citation>
    <scope>NUCLEOTIDE SEQUENCE [LARGE SCALE GENOMIC DNA]</scope>
    <source>
        <strain>IL1403</strain>
    </source>
</reference>
<dbReference type="EC" id="3.1.1.29" evidence="1"/>
<dbReference type="EMBL" id="AE005176">
    <property type="protein sequence ID" value="AAK04110.1"/>
    <property type="molecule type" value="Genomic_DNA"/>
</dbReference>
<dbReference type="PIR" id="D86626">
    <property type="entry name" value="D86626"/>
</dbReference>
<dbReference type="RefSeq" id="NP_266168.1">
    <property type="nucleotide sequence ID" value="NC_002662.1"/>
</dbReference>
<dbReference type="RefSeq" id="WP_010905032.1">
    <property type="nucleotide sequence ID" value="NC_002662.1"/>
</dbReference>
<dbReference type="SMR" id="Q9CJI1"/>
<dbReference type="PaxDb" id="272623-L0365"/>
<dbReference type="EnsemblBacteria" id="AAK04110">
    <property type="protein sequence ID" value="AAK04110"/>
    <property type="gene ID" value="L0365"/>
</dbReference>
<dbReference type="KEGG" id="lla:L0365"/>
<dbReference type="PATRIC" id="fig|272623.7.peg.14"/>
<dbReference type="eggNOG" id="COG0193">
    <property type="taxonomic scope" value="Bacteria"/>
</dbReference>
<dbReference type="HOGENOM" id="CLU_062456_4_1_9"/>
<dbReference type="OrthoDB" id="9800507at2"/>
<dbReference type="Proteomes" id="UP000002196">
    <property type="component" value="Chromosome"/>
</dbReference>
<dbReference type="GO" id="GO:0005737">
    <property type="term" value="C:cytoplasm"/>
    <property type="evidence" value="ECO:0007669"/>
    <property type="project" value="UniProtKB-SubCell"/>
</dbReference>
<dbReference type="GO" id="GO:0004045">
    <property type="term" value="F:peptidyl-tRNA hydrolase activity"/>
    <property type="evidence" value="ECO:0007669"/>
    <property type="project" value="UniProtKB-UniRule"/>
</dbReference>
<dbReference type="GO" id="GO:0000049">
    <property type="term" value="F:tRNA binding"/>
    <property type="evidence" value="ECO:0007669"/>
    <property type="project" value="UniProtKB-UniRule"/>
</dbReference>
<dbReference type="GO" id="GO:0006515">
    <property type="term" value="P:protein quality control for misfolded or incompletely synthesized proteins"/>
    <property type="evidence" value="ECO:0007669"/>
    <property type="project" value="UniProtKB-UniRule"/>
</dbReference>
<dbReference type="GO" id="GO:0072344">
    <property type="term" value="P:rescue of stalled ribosome"/>
    <property type="evidence" value="ECO:0007669"/>
    <property type="project" value="UniProtKB-UniRule"/>
</dbReference>
<dbReference type="CDD" id="cd00462">
    <property type="entry name" value="PTH"/>
    <property type="match status" value="1"/>
</dbReference>
<dbReference type="FunFam" id="3.40.50.1470:FF:000001">
    <property type="entry name" value="Peptidyl-tRNA hydrolase"/>
    <property type="match status" value="1"/>
</dbReference>
<dbReference type="Gene3D" id="3.40.50.1470">
    <property type="entry name" value="Peptidyl-tRNA hydrolase"/>
    <property type="match status" value="1"/>
</dbReference>
<dbReference type="HAMAP" id="MF_00083">
    <property type="entry name" value="Pept_tRNA_hydro_bact"/>
    <property type="match status" value="1"/>
</dbReference>
<dbReference type="InterPro" id="IPR001328">
    <property type="entry name" value="Pept_tRNA_hydro"/>
</dbReference>
<dbReference type="InterPro" id="IPR018171">
    <property type="entry name" value="Pept_tRNA_hydro_CS"/>
</dbReference>
<dbReference type="InterPro" id="IPR036416">
    <property type="entry name" value="Pept_tRNA_hydro_sf"/>
</dbReference>
<dbReference type="NCBIfam" id="TIGR00447">
    <property type="entry name" value="pth"/>
    <property type="match status" value="1"/>
</dbReference>
<dbReference type="PANTHER" id="PTHR17224">
    <property type="entry name" value="PEPTIDYL-TRNA HYDROLASE"/>
    <property type="match status" value="1"/>
</dbReference>
<dbReference type="PANTHER" id="PTHR17224:SF1">
    <property type="entry name" value="PEPTIDYL-TRNA HYDROLASE"/>
    <property type="match status" value="1"/>
</dbReference>
<dbReference type="Pfam" id="PF01195">
    <property type="entry name" value="Pept_tRNA_hydro"/>
    <property type="match status" value="1"/>
</dbReference>
<dbReference type="SUPFAM" id="SSF53178">
    <property type="entry name" value="Peptidyl-tRNA hydrolase-like"/>
    <property type="match status" value="1"/>
</dbReference>
<dbReference type="PROSITE" id="PS01195">
    <property type="entry name" value="PEPT_TRNA_HYDROL_1"/>
    <property type="match status" value="1"/>
</dbReference>
<keyword id="KW-0963">Cytoplasm</keyword>
<keyword id="KW-0378">Hydrolase</keyword>
<keyword id="KW-1185">Reference proteome</keyword>
<keyword id="KW-0694">RNA-binding</keyword>
<keyword id="KW-0820">tRNA-binding</keyword>
<sequence length="188" mass="20937">MTKMIVGLGNPGDKYEKTKHNMGFMALDLLAKELNVDFKEEKPFMSLVASTFVNGEKLFLVKPLTFMNESGRSVAPLLKYYNIDEADLTVMHDDLDSPVGRVRLRQKGSSGGQNGIKSVITHVGSQTFNRVKIGIGRPKHGMTVGNHVLSGFDNEDKEIAQDGIFKAVDAMKFYLENGDFQKTMNKFN</sequence>
<proteinExistence type="inferred from homology"/>
<gene>
    <name evidence="1" type="primary">pth</name>
    <name type="ordered locus">LL0012</name>
    <name type="ORF">L0365</name>
</gene>
<name>PTH_LACLA</name>